<evidence type="ECO:0000250" key="1"/>
<evidence type="ECO:0000250" key="2">
    <source>
        <dbReference type="UniProtKB" id="Q8IWA4"/>
    </source>
</evidence>
<evidence type="ECO:0000255" key="3"/>
<evidence type="ECO:0000255" key="4">
    <source>
        <dbReference type="PROSITE-ProRule" id="PRU01055"/>
    </source>
</evidence>
<evidence type="ECO:0000256" key="5">
    <source>
        <dbReference type="SAM" id="MobiDB-lite"/>
    </source>
</evidence>
<evidence type="ECO:0000269" key="6">
    <source>
    </source>
</evidence>
<evidence type="ECO:0000269" key="7">
    <source>
    </source>
</evidence>
<evidence type="ECO:0000269" key="8">
    <source>
    </source>
</evidence>
<evidence type="ECO:0000269" key="9">
    <source>
    </source>
</evidence>
<evidence type="ECO:0000269" key="10">
    <source>
    </source>
</evidence>
<evidence type="ECO:0000269" key="11">
    <source>
    </source>
</evidence>
<evidence type="ECO:0000269" key="12">
    <source>
    </source>
</evidence>
<evidence type="ECO:0000269" key="13">
    <source>
    </source>
</evidence>
<evidence type="ECO:0000269" key="14">
    <source>
    </source>
</evidence>
<evidence type="ECO:0000269" key="15">
    <source>
    </source>
</evidence>
<evidence type="ECO:0000305" key="16"/>
<evidence type="ECO:0000312" key="17">
    <source>
        <dbReference type="FlyBase" id="FBgn0029870"/>
    </source>
</evidence>
<keyword id="KW-0025">Alternative splicing</keyword>
<keyword id="KW-0175">Coiled coil</keyword>
<keyword id="KW-0342">GTP-binding</keyword>
<keyword id="KW-0378">Hydrolase</keyword>
<keyword id="KW-0472">Membrane</keyword>
<keyword id="KW-0496">Mitochondrion</keyword>
<keyword id="KW-1000">Mitochondrion outer membrane</keyword>
<keyword id="KW-0547">Nucleotide-binding</keyword>
<keyword id="KW-0597">Phosphoprotein</keyword>
<keyword id="KW-1185">Reference proteome</keyword>
<keyword id="KW-0812">Transmembrane</keyword>
<keyword id="KW-1133">Transmembrane helix</keyword>
<keyword id="KW-0832">Ubl conjugation</keyword>
<protein>
    <recommendedName>
        <fullName>Transmembrane GTPase Marf</fullName>
        <ecNumber>3.6.5.-</ecNumber>
    </recommendedName>
    <alternativeName>
        <fullName>Mitochondrial assembly regulatory factor</fullName>
    </alternativeName>
    <alternativeName>
        <fullName>Mitofusin</fullName>
    </alternativeName>
</protein>
<proteinExistence type="evidence at protein level"/>
<comment type="function">
    <text evidence="8 9 10 11 12 15">Mitochondrial outer membrane GTPase that mediates mitochondrial clustering and fusion (PubMed:18799731, PubMed:20869429, PubMed:22396657, PubMed:24192653, PubMed:26214738). Mitochondrial fusion is the physical merging of mitochondria that gives rise to mitochondrial networks, and this process is counterbalanced by mitochondrial fission which fragments networks (PubMed:20869429, PubMed:22396657, PubMed:24192653). Promotes, but is not required for park recruitment to dysfunctional mitochondria (PubMed:20194754).</text>
</comment>
<comment type="catalytic activity">
    <reaction>
        <text>GTP + H2O = GDP + phosphate + H(+)</text>
        <dbReference type="Rhea" id="RHEA:19669"/>
        <dbReference type="ChEBI" id="CHEBI:15377"/>
        <dbReference type="ChEBI" id="CHEBI:15378"/>
        <dbReference type="ChEBI" id="CHEBI:37565"/>
        <dbReference type="ChEBI" id="CHEBI:43474"/>
        <dbReference type="ChEBI" id="CHEBI:58189"/>
    </reaction>
</comment>
<comment type="subunit">
    <text evidence="13">Interacts with Mul1.</text>
</comment>
<comment type="interaction">
    <interactant intactId="EBI-83262">
        <id>Q7YU24</id>
    </interactant>
    <interactant intactId="EBI-156824">
        <id>Q9VZJ9</id>
        <label>Mul1</label>
    </interactant>
    <organismsDiffer>false</organismsDiffer>
    <experiments>2</experiments>
</comment>
<comment type="interaction">
    <interactant intactId="EBI-83262">
        <id>Q7YU24</id>
    </interactant>
    <interactant intactId="EBI-131530">
        <id>Q7KTX7</id>
        <label>park</label>
    </interactant>
    <organismsDiffer>false</organismsDiffer>
    <experiments>2</experiments>
</comment>
<comment type="subcellular location">
    <subcellularLocation>
        <location evidence="15">Mitochondrion outer membrane</location>
        <topology evidence="1">Multi-pass membrane protein</topology>
    </subcellularLocation>
</comment>
<comment type="alternative products">
    <event type="alternative splicing"/>
    <isoform>
        <id>Q7YU24-1</id>
        <name>1</name>
        <name evidence="17">B</name>
        <name evidence="17">C</name>
        <sequence type="displayed"/>
    </isoform>
    <isoform>
        <id>Q7YU24-2</id>
        <name>2</name>
        <name evidence="17">D</name>
        <sequence type="described" ref="VSP_058137"/>
    </isoform>
</comment>
<comment type="tissue specificity">
    <text evidence="6">Widely expressed in embryos, accumulating in the mesoderm and endoderm during gut development. In the male germ line, it is expressed in spermatogonia, spermatocytes and early spermatids.</text>
</comment>
<comment type="developmental stage">
    <text evidence="6">Expressed both maternally and zygotically.</text>
</comment>
<comment type="PTM">
    <text evidence="9 13 15">Ubiquitinated by park and Mul1 (PubMed:20194754, PubMed:24898855). Ubiquitinated, probably by HUWE1, when dietary stearate (C18:0) levels are low; ubiquitination inhibits mitochondrial fusion (PubMed:26214738).</text>
</comment>
<comment type="disruption phenotype">
    <text evidence="8 9 10 11 12 15">Lethal at the early larval stage (L1/L2); mitochondria are fragmented and mitochondrial respiration is impaired (PubMed:26214738). RNAi-mediated knockdown is also lethal (PubMed:20869429). RNAi-mediated knockdown in specific tissues such as cardiomyocytes, muscles and larval neurons produces various phenotypes resulting from adherent, dysfunctional mitochondria (PubMed:18799731, PubMed:20869429, PubMed:22396657, PubMed:24192653). Mitochondria display characteristics such as abnormal cristae, fragmentation, elongation, decreased DNA content, increased ROS and depolarization (PubMed:20194754, PubMed:20869429, PubMed:22396657, PubMed:24192653). Mitochondria in larval muscles display increased mitochondrial flux and net velocity in both anterograde and retrograde directions (PubMed:20194754).</text>
</comment>
<comment type="similarity">
    <text evidence="4">Belongs to the TRAFAC class dynamin-like GTPase superfamily. Dynamin/Fzo/YdjA family. Mitofusin subfamily.</text>
</comment>
<dbReference type="EC" id="3.6.5.-"/>
<dbReference type="EMBL" id="AF355475">
    <property type="protein sequence ID" value="AAM00196.1"/>
    <property type="molecule type" value="mRNA"/>
</dbReference>
<dbReference type="EMBL" id="AE014298">
    <property type="protein sequence ID" value="AAS65267.2"/>
    <property type="molecule type" value="Genomic_DNA"/>
</dbReference>
<dbReference type="EMBL" id="AE014298">
    <property type="protein sequence ID" value="AAF46162.2"/>
    <property type="molecule type" value="Genomic_DNA"/>
</dbReference>
<dbReference type="EMBL" id="AY095019">
    <property type="protein sequence ID" value="AAM11347.2"/>
    <property type="molecule type" value="mRNA"/>
</dbReference>
<dbReference type="EMBL" id="BT010027">
    <property type="protein sequence ID" value="AAQ22496.1"/>
    <property type="molecule type" value="mRNA"/>
</dbReference>
<dbReference type="RefSeq" id="NP_572320.2">
    <molecule id="Q7YU24-2"/>
    <property type="nucleotide sequence ID" value="NM_132092.3"/>
</dbReference>
<dbReference type="RefSeq" id="NP_996357.1">
    <molecule id="Q7YU24-1"/>
    <property type="nucleotide sequence ID" value="NM_206634.2"/>
</dbReference>
<dbReference type="RefSeq" id="NP_996358.2">
    <molecule id="Q7YU24-1"/>
    <property type="nucleotide sequence ID" value="NM_206635.3"/>
</dbReference>
<dbReference type="SMR" id="Q7YU24"/>
<dbReference type="BioGRID" id="58068">
    <property type="interactions" value="36"/>
</dbReference>
<dbReference type="DIP" id="DIP-58614N"/>
<dbReference type="FunCoup" id="Q7YU24">
    <property type="interactions" value="1290"/>
</dbReference>
<dbReference type="IntAct" id="Q7YU24">
    <property type="interactions" value="5"/>
</dbReference>
<dbReference type="STRING" id="7227.FBpp0310030"/>
<dbReference type="iPTMnet" id="Q7YU24"/>
<dbReference type="PaxDb" id="7227-FBpp0070873"/>
<dbReference type="DNASU" id="31581"/>
<dbReference type="EnsemblMetazoa" id="FBtr0070909">
    <molecule id="Q7YU24-1"/>
    <property type="protein sequence ID" value="FBpp0089222"/>
    <property type="gene ID" value="FBgn0029870"/>
</dbReference>
<dbReference type="EnsemblMetazoa" id="FBtr0070910">
    <molecule id="Q7YU24-1"/>
    <property type="protein sequence ID" value="FBpp0089221"/>
    <property type="gene ID" value="FBgn0029870"/>
</dbReference>
<dbReference type="EnsemblMetazoa" id="FBtr0343373">
    <molecule id="Q7YU24-2"/>
    <property type="protein sequence ID" value="FBpp0310030"/>
    <property type="gene ID" value="FBgn0029870"/>
</dbReference>
<dbReference type="GeneID" id="31581"/>
<dbReference type="KEGG" id="dme:Dmel_CG3869"/>
<dbReference type="AGR" id="FB:FBgn0029870"/>
<dbReference type="CTD" id="31581"/>
<dbReference type="FlyBase" id="FBgn0029870">
    <property type="gene designation" value="Marf"/>
</dbReference>
<dbReference type="VEuPathDB" id="VectorBase:FBgn0029870"/>
<dbReference type="eggNOG" id="KOG0448">
    <property type="taxonomic scope" value="Eukaryota"/>
</dbReference>
<dbReference type="GeneTree" id="ENSGT00390000013727"/>
<dbReference type="InParanoid" id="Q7YU24"/>
<dbReference type="OMA" id="YRINCES"/>
<dbReference type="OrthoDB" id="6256226at2759"/>
<dbReference type="PhylomeDB" id="Q7YU24"/>
<dbReference type="Reactome" id="R-DME-5205685">
    <property type="pathway name" value="PINK1-PRKN Mediated Mitophagy"/>
</dbReference>
<dbReference type="Reactome" id="R-DME-9013419">
    <property type="pathway name" value="RHOT2 GTPase cycle"/>
</dbReference>
<dbReference type="Reactome" id="R-DME-983231">
    <property type="pathway name" value="Factors involved in megakaryocyte development and platelet production"/>
</dbReference>
<dbReference type="SignaLink" id="Q7YU24"/>
<dbReference type="BioGRID-ORCS" id="31581">
    <property type="hits" value="1 hit in 3 CRISPR screens"/>
</dbReference>
<dbReference type="ChiTaRS" id="Marf">
    <property type="organism name" value="fly"/>
</dbReference>
<dbReference type="GenomeRNAi" id="31581"/>
<dbReference type="PRO" id="PR:Q7YU24"/>
<dbReference type="Proteomes" id="UP000000803">
    <property type="component" value="Chromosome X"/>
</dbReference>
<dbReference type="Bgee" id="FBgn0029870">
    <property type="expression patterns" value="Expressed in indirect flight muscle cell (Drosophila) in post-embryonic organism and 290 other cell types or tissues"/>
</dbReference>
<dbReference type="ExpressionAtlas" id="Q7YU24">
    <property type="expression patterns" value="baseline and differential"/>
</dbReference>
<dbReference type="GO" id="GO:1904115">
    <property type="term" value="C:axon cytoplasm"/>
    <property type="evidence" value="ECO:0007669"/>
    <property type="project" value="GOC"/>
</dbReference>
<dbReference type="GO" id="GO:0005740">
    <property type="term" value="C:mitochondrial envelope"/>
    <property type="evidence" value="ECO:0000250"/>
    <property type="project" value="UniProtKB"/>
</dbReference>
<dbReference type="GO" id="GO:0005741">
    <property type="term" value="C:mitochondrial outer membrane"/>
    <property type="evidence" value="ECO:0000314"/>
    <property type="project" value="UniProtKB"/>
</dbReference>
<dbReference type="GO" id="GO:0005525">
    <property type="term" value="F:GTP binding"/>
    <property type="evidence" value="ECO:0007669"/>
    <property type="project" value="UniProtKB-KW"/>
</dbReference>
<dbReference type="GO" id="GO:0003924">
    <property type="term" value="F:GTPase activity"/>
    <property type="evidence" value="ECO:0000250"/>
    <property type="project" value="UniProtKB"/>
</dbReference>
<dbReference type="GO" id="GO:0008344">
    <property type="term" value="P:adult locomotory behavior"/>
    <property type="evidence" value="ECO:0000315"/>
    <property type="project" value="FlyBase"/>
</dbReference>
<dbReference type="GO" id="GO:0019896">
    <property type="term" value="P:axonal transport of mitochondrion"/>
    <property type="evidence" value="ECO:0000315"/>
    <property type="project" value="FlyBase"/>
</dbReference>
<dbReference type="GO" id="GO:0006697">
    <property type="term" value="P:ecdysone biosynthetic process"/>
    <property type="evidence" value="ECO:0000315"/>
    <property type="project" value="FlyBase"/>
</dbReference>
<dbReference type="GO" id="GO:0007029">
    <property type="term" value="P:endoplasmic reticulum organization"/>
    <property type="evidence" value="ECO:0000315"/>
    <property type="project" value="FlyBase"/>
</dbReference>
<dbReference type="GO" id="GO:0034389">
    <property type="term" value="P:lipid droplet organization"/>
    <property type="evidence" value="ECO:0000315"/>
    <property type="project" value="FlyBase"/>
</dbReference>
<dbReference type="GO" id="GO:0035170">
    <property type="term" value="P:lymph gland crystal cell differentiation"/>
    <property type="evidence" value="ECO:0000315"/>
    <property type="project" value="FlyBase"/>
</dbReference>
<dbReference type="GO" id="GO:0008053">
    <property type="term" value="P:mitochondrial fusion"/>
    <property type="evidence" value="ECO:0000315"/>
    <property type="project" value="UniProtKB"/>
</dbReference>
<dbReference type="GO" id="GO:0051646">
    <property type="term" value="P:mitochondrion localization"/>
    <property type="evidence" value="ECO:0000318"/>
    <property type="project" value="GO_Central"/>
</dbReference>
<dbReference type="GO" id="GO:0007005">
    <property type="term" value="P:mitochondrion organization"/>
    <property type="evidence" value="ECO:0000315"/>
    <property type="project" value="FlyBase"/>
</dbReference>
<dbReference type="GO" id="GO:0010636">
    <property type="term" value="P:positive regulation of mitochondrial fusion"/>
    <property type="evidence" value="ECO:0000315"/>
    <property type="project" value="UniProtKB"/>
</dbReference>
<dbReference type="GO" id="GO:0090140">
    <property type="term" value="P:regulation of mitochondrial fission"/>
    <property type="evidence" value="ECO:0000315"/>
    <property type="project" value="FlyBase"/>
</dbReference>
<dbReference type="GO" id="GO:0034976">
    <property type="term" value="P:response to endoplasmic reticulum stress"/>
    <property type="evidence" value="ECO:0000315"/>
    <property type="project" value="FlyBase"/>
</dbReference>
<dbReference type="CDD" id="cd09912">
    <property type="entry name" value="DLP_2"/>
    <property type="match status" value="1"/>
</dbReference>
<dbReference type="FunFam" id="1.20.5.110:FF:000012">
    <property type="entry name" value="Mitofusin 2"/>
    <property type="match status" value="1"/>
</dbReference>
<dbReference type="FunFam" id="3.40.50.300:FF:000214">
    <property type="entry name" value="Mitofusin 2"/>
    <property type="match status" value="1"/>
</dbReference>
<dbReference type="Gene3D" id="1.20.5.110">
    <property type="match status" value="1"/>
</dbReference>
<dbReference type="Gene3D" id="3.40.50.300">
    <property type="entry name" value="P-loop containing nucleotide triphosphate hydrolases"/>
    <property type="match status" value="1"/>
</dbReference>
<dbReference type="InterPro" id="IPR045063">
    <property type="entry name" value="Dynamin_N"/>
</dbReference>
<dbReference type="InterPro" id="IPR006884">
    <property type="entry name" value="Fzo/mitofusin_HR2"/>
</dbReference>
<dbReference type="InterPro" id="IPR030381">
    <property type="entry name" value="G_DYNAMIN_dom"/>
</dbReference>
<dbReference type="InterPro" id="IPR027094">
    <property type="entry name" value="Mitofusin_fam"/>
</dbReference>
<dbReference type="InterPro" id="IPR027417">
    <property type="entry name" value="P-loop_NTPase"/>
</dbReference>
<dbReference type="PANTHER" id="PTHR10465">
    <property type="entry name" value="TRANSMEMBRANE GTPASE FZO1"/>
    <property type="match status" value="1"/>
</dbReference>
<dbReference type="PANTHER" id="PTHR10465:SF3">
    <property type="entry name" value="TRANSMEMBRANE GTPASE MARF-RELATED"/>
    <property type="match status" value="1"/>
</dbReference>
<dbReference type="Pfam" id="PF00350">
    <property type="entry name" value="Dynamin_N"/>
    <property type="match status" value="1"/>
</dbReference>
<dbReference type="Pfam" id="PF04799">
    <property type="entry name" value="Fzo_mitofusin"/>
    <property type="match status" value="1"/>
</dbReference>
<dbReference type="SUPFAM" id="SSF111479">
    <property type="entry name" value="Fzo-like conserved region"/>
    <property type="match status" value="1"/>
</dbReference>
<dbReference type="SUPFAM" id="SSF52540">
    <property type="entry name" value="P-loop containing nucleoside triphosphate hydrolases"/>
    <property type="match status" value="1"/>
</dbReference>
<dbReference type="PROSITE" id="PS51718">
    <property type="entry name" value="G_DYNAMIN_2"/>
    <property type="match status" value="1"/>
</dbReference>
<name>MARF_DROME</name>
<accession>Q7YU24</accession>
<accession>Q0KHV7</accession>
<accession>Q86DQ3</accession>
<accession>Q8T3J4</accession>
<accession>Q9W3Z9</accession>
<organism>
    <name type="scientific">Drosophila melanogaster</name>
    <name type="common">Fruit fly</name>
    <dbReference type="NCBI Taxonomy" id="7227"/>
    <lineage>
        <taxon>Eukaryota</taxon>
        <taxon>Metazoa</taxon>
        <taxon>Ecdysozoa</taxon>
        <taxon>Arthropoda</taxon>
        <taxon>Hexapoda</taxon>
        <taxon>Insecta</taxon>
        <taxon>Pterygota</taxon>
        <taxon>Neoptera</taxon>
        <taxon>Endopterygota</taxon>
        <taxon>Diptera</taxon>
        <taxon>Brachycera</taxon>
        <taxon>Muscomorpha</taxon>
        <taxon>Ephydroidea</taxon>
        <taxon>Drosophilidae</taxon>
        <taxon>Drosophila</taxon>
        <taxon>Sophophora</taxon>
    </lineage>
</organism>
<feature type="chain" id="PRO_0000127679" description="Transmembrane GTPase Marf">
    <location>
        <begin position="1"/>
        <end position="810"/>
    </location>
</feature>
<feature type="topological domain" description="Cytoplasmic" evidence="3">
    <location>
        <begin position="1"/>
        <end position="637"/>
    </location>
</feature>
<feature type="transmembrane region" description="Helical; Name=1" evidence="3">
    <location>
        <begin position="638"/>
        <end position="648"/>
    </location>
</feature>
<feature type="topological domain" description="Mitochondrial intermembrane" evidence="3">
    <location>
        <begin position="649"/>
        <end position="668"/>
    </location>
</feature>
<feature type="transmembrane region" description="Helical; Name=2" evidence="3">
    <location>
        <begin position="669"/>
        <end position="689"/>
    </location>
</feature>
<feature type="topological domain" description="Cytoplasmic" evidence="3">
    <location>
        <begin position="690"/>
        <end position="810"/>
    </location>
</feature>
<feature type="domain" description="Dynamin-type G" evidence="4">
    <location>
        <begin position="134"/>
        <end position="382"/>
    </location>
</feature>
<feature type="region of interest" description="Disordered" evidence="5">
    <location>
        <begin position="13"/>
        <end position="40"/>
    </location>
</feature>
<feature type="region of interest" description="G1 motif" evidence="4">
    <location>
        <begin position="144"/>
        <end position="151"/>
    </location>
</feature>
<feature type="region of interest" description="G2 motif" evidence="4">
    <location>
        <begin position="170"/>
        <end position="171"/>
    </location>
</feature>
<feature type="region of interest" description="G3 motif" evidence="4">
    <location>
        <begin position="239"/>
        <end position="242"/>
    </location>
</feature>
<feature type="region of interest" description="G4 motif" evidence="4">
    <location>
        <begin position="298"/>
        <end position="301"/>
    </location>
</feature>
<feature type="region of interest" description="G5 motif" evidence="4">
    <location>
        <position position="327"/>
    </location>
</feature>
<feature type="region of interest" description="Disordered" evidence="5">
    <location>
        <begin position="609"/>
        <end position="630"/>
    </location>
</feature>
<feature type="coiled-coil region" evidence="3">
    <location>
        <begin position="427"/>
        <end position="476"/>
    </location>
</feature>
<feature type="coiled-coil region" evidence="3">
    <location>
        <begin position="759"/>
        <end position="806"/>
    </location>
</feature>
<feature type="compositionally biased region" description="Basic and acidic residues" evidence="5">
    <location>
        <begin position="20"/>
        <end position="32"/>
    </location>
</feature>
<feature type="binding site" evidence="2">
    <location>
        <begin position="147"/>
        <end position="152"/>
    </location>
    <ligand>
        <name>GTP</name>
        <dbReference type="ChEBI" id="CHEBI:37565"/>
    </ligand>
</feature>
<feature type="binding site" evidence="2">
    <location>
        <begin position="298"/>
        <end position="301"/>
    </location>
    <ligand>
        <name>GTP</name>
        <dbReference type="ChEBI" id="CHEBI:37565"/>
    </ligand>
</feature>
<feature type="binding site" evidence="2">
    <location>
        <position position="345"/>
    </location>
    <ligand>
        <name>GTP</name>
        <dbReference type="ChEBI" id="CHEBI:37565"/>
    </ligand>
</feature>
<feature type="modified residue" description="Phosphothreonine" evidence="7">
    <location>
        <position position="8"/>
    </location>
</feature>
<feature type="modified residue" description="Phosphoserine" evidence="7">
    <location>
        <position position="38"/>
    </location>
</feature>
<feature type="modified residue" description="Phosphothreonine" evidence="7">
    <location>
        <position position="553"/>
    </location>
</feature>
<feature type="modified residue" description="Phosphoserine" evidence="7">
    <location>
        <position position="554"/>
    </location>
</feature>
<feature type="modified residue" description="Phosphothreonine" evidence="7">
    <location>
        <position position="555"/>
    </location>
</feature>
<feature type="splice variant" id="VSP_058137" description="In isoform 2.">
    <original>S</original>
    <variation>SELAK</variation>
    <location>
        <position position="312"/>
    </location>
</feature>
<feature type="mutagenesis site" description="Shows high levels of reactive oxygen species (ROS) and accumulation of lipid droplets in pigment and epithelial glia. Lipid droplet accumulation occurs early, prior to the onset of neurodegeneration." evidence="14">
    <original>I</original>
    <variation>N</variation>
    <location>
        <position position="221"/>
    </location>
</feature>
<feature type="sequence conflict" description="In Ref. 1; AAM00196." evidence="16" ref="1">
    <original>G</original>
    <variation>Q</variation>
    <location>
        <position position="621"/>
    </location>
</feature>
<reference key="1">
    <citation type="journal article" date="2003" name="J. Biol. Chem.">
        <title>Mitofusin-2 determines mitochondrial network architecture and mitochondrial metabolism. A novel regulatory mechanism altered in obesity.</title>
        <authorList>
            <person name="Bach D."/>
            <person name="Pich S."/>
            <person name="Soriano F.X."/>
            <person name="Vega N."/>
            <person name="Baumgartner B."/>
            <person name="Oriola J."/>
            <person name="Daugaard J.R."/>
            <person name="Lloberas J."/>
            <person name="Camps M."/>
            <person name="Zierath J.R."/>
            <person name="Rabasa-Lhoret R."/>
            <person name="Wallberg-Henriksson H."/>
            <person name="Laville M."/>
            <person name="Palacin M."/>
            <person name="Vidal H."/>
            <person name="Rivera F."/>
            <person name="Brand M."/>
            <person name="Zorzano A."/>
        </authorList>
    </citation>
    <scope>NUCLEOTIDE SEQUENCE [MRNA] (ISOFORM 1)</scope>
</reference>
<reference key="2">
    <citation type="journal article" date="2000" name="Science">
        <title>The genome sequence of Drosophila melanogaster.</title>
        <authorList>
            <person name="Adams M.D."/>
            <person name="Celniker S.E."/>
            <person name="Holt R.A."/>
            <person name="Evans C.A."/>
            <person name="Gocayne J.D."/>
            <person name="Amanatides P.G."/>
            <person name="Scherer S.E."/>
            <person name="Li P.W."/>
            <person name="Hoskins R.A."/>
            <person name="Galle R.F."/>
            <person name="George R.A."/>
            <person name="Lewis S.E."/>
            <person name="Richards S."/>
            <person name="Ashburner M."/>
            <person name="Henderson S.N."/>
            <person name="Sutton G.G."/>
            <person name="Wortman J.R."/>
            <person name="Yandell M.D."/>
            <person name="Zhang Q."/>
            <person name="Chen L.X."/>
            <person name="Brandon R.C."/>
            <person name="Rogers Y.-H.C."/>
            <person name="Blazej R.G."/>
            <person name="Champe M."/>
            <person name="Pfeiffer B.D."/>
            <person name="Wan K.H."/>
            <person name="Doyle C."/>
            <person name="Baxter E.G."/>
            <person name="Helt G."/>
            <person name="Nelson C.R."/>
            <person name="Miklos G.L.G."/>
            <person name="Abril J.F."/>
            <person name="Agbayani A."/>
            <person name="An H.-J."/>
            <person name="Andrews-Pfannkoch C."/>
            <person name="Baldwin D."/>
            <person name="Ballew R.M."/>
            <person name="Basu A."/>
            <person name="Baxendale J."/>
            <person name="Bayraktaroglu L."/>
            <person name="Beasley E.M."/>
            <person name="Beeson K.Y."/>
            <person name="Benos P.V."/>
            <person name="Berman B.P."/>
            <person name="Bhandari D."/>
            <person name="Bolshakov S."/>
            <person name="Borkova D."/>
            <person name="Botchan M.R."/>
            <person name="Bouck J."/>
            <person name="Brokstein P."/>
            <person name="Brottier P."/>
            <person name="Burtis K.C."/>
            <person name="Busam D.A."/>
            <person name="Butler H."/>
            <person name="Cadieu E."/>
            <person name="Center A."/>
            <person name="Chandra I."/>
            <person name="Cherry J.M."/>
            <person name="Cawley S."/>
            <person name="Dahlke C."/>
            <person name="Davenport L.B."/>
            <person name="Davies P."/>
            <person name="de Pablos B."/>
            <person name="Delcher A."/>
            <person name="Deng Z."/>
            <person name="Mays A.D."/>
            <person name="Dew I."/>
            <person name="Dietz S.M."/>
            <person name="Dodson K."/>
            <person name="Doup L.E."/>
            <person name="Downes M."/>
            <person name="Dugan-Rocha S."/>
            <person name="Dunkov B.C."/>
            <person name="Dunn P."/>
            <person name="Durbin K.J."/>
            <person name="Evangelista C.C."/>
            <person name="Ferraz C."/>
            <person name="Ferriera S."/>
            <person name="Fleischmann W."/>
            <person name="Fosler C."/>
            <person name="Gabrielian A.E."/>
            <person name="Garg N.S."/>
            <person name="Gelbart W.M."/>
            <person name="Glasser K."/>
            <person name="Glodek A."/>
            <person name="Gong F."/>
            <person name="Gorrell J.H."/>
            <person name="Gu Z."/>
            <person name="Guan P."/>
            <person name="Harris M."/>
            <person name="Harris N.L."/>
            <person name="Harvey D.A."/>
            <person name="Heiman T.J."/>
            <person name="Hernandez J.R."/>
            <person name="Houck J."/>
            <person name="Hostin D."/>
            <person name="Houston K.A."/>
            <person name="Howland T.J."/>
            <person name="Wei M.-H."/>
            <person name="Ibegwam C."/>
            <person name="Jalali M."/>
            <person name="Kalush F."/>
            <person name="Karpen G.H."/>
            <person name="Ke Z."/>
            <person name="Kennison J.A."/>
            <person name="Ketchum K.A."/>
            <person name="Kimmel B.E."/>
            <person name="Kodira C.D."/>
            <person name="Kraft C.L."/>
            <person name="Kravitz S."/>
            <person name="Kulp D."/>
            <person name="Lai Z."/>
            <person name="Lasko P."/>
            <person name="Lei Y."/>
            <person name="Levitsky A.A."/>
            <person name="Li J.H."/>
            <person name="Li Z."/>
            <person name="Liang Y."/>
            <person name="Lin X."/>
            <person name="Liu X."/>
            <person name="Mattei B."/>
            <person name="McIntosh T.C."/>
            <person name="McLeod M.P."/>
            <person name="McPherson D."/>
            <person name="Merkulov G."/>
            <person name="Milshina N.V."/>
            <person name="Mobarry C."/>
            <person name="Morris J."/>
            <person name="Moshrefi A."/>
            <person name="Mount S.M."/>
            <person name="Moy M."/>
            <person name="Murphy B."/>
            <person name="Murphy L."/>
            <person name="Muzny D.M."/>
            <person name="Nelson D.L."/>
            <person name="Nelson D.R."/>
            <person name="Nelson K.A."/>
            <person name="Nixon K."/>
            <person name="Nusskern D.R."/>
            <person name="Pacleb J.M."/>
            <person name="Palazzolo M."/>
            <person name="Pittman G.S."/>
            <person name="Pan S."/>
            <person name="Pollard J."/>
            <person name="Puri V."/>
            <person name="Reese M.G."/>
            <person name="Reinert K."/>
            <person name="Remington K."/>
            <person name="Saunders R.D.C."/>
            <person name="Scheeler F."/>
            <person name="Shen H."/>
            <person name="Shue B.C."/>
            <person name="Siden-Kiamos I."/>
            <person name="Simpson M."/>
            <person name="Skupski M.P."/>
            <person name="Smith T.J."/>
            <person name="Spier E."/>
            <person name="Spradling A.C."/>
            <person name="Stapleton M."/>
            <person name="Strong R."/>
            <person name="Sun E."/>
            <person name="Svirskas R."/>
            <person name="Tector C."/>
            <person name="Turner R."/>
            <person name="Venter E."/>
            <person name="Wang A.H."/>
            <person name="Wang X."/>
            <person name="Wang Z.-Y."/>
            <person name="Wassarman D.A."/>
            <person name="Weinstock G.M."/>
            <person name="Weissenbach J."/>
            <person name="Williams S.M."/>
            <person name="Woodage T."/>
            <person name="Worley K.C."/>
            <person name="Wu D."/>
            <person name="Yang S."/>
            <person name="Yao Q.A."/>
            <person name="Ye J."/>
            <person name="Yeh R.-F."/>
            <person name="Zaveri J.S."/>
            <person name="Zhan M."/>
            <person name="Zhang G."/>
            <person name="Zhao Q."/>
            <person name="Zheng L."/>
            <person name="Zheng X.H."/>
            <person name="Zhong F.N."/>
            <person name="Zhong W."/>
            <person name="Zhou X."/>
            <person name="Zhu S.C."/>
            <person name="Zhu X."/>
            <person name="Smith H.O."/>
            <person name="Gibbs R.A."/>
            <person name="Myers E.W."/>
            <person name="Rubin G.M."/>
            <person name="Venter J.C."/>
        </authorList>
    </citation>
    <scope>NUCLEOTIDE SEQUENCE [LARGE SCALE GENOMIC DNA]</scope>
    <source>
        <strain>Berkeley</strain>
    </source>
</reference>
<reference key="3">
    <citation type="journal article" date="2002" name="Genome Biol.">
        <title>Annotation of the Drosophila melanogaster euchromatic genome: a systematic review.</title>
        <authorList>
            <person name="Misra S."/>
            <person name="Crosby M.A."/>
            <person name="Mungall C.J."/>
            <person name="Matthews B.B."/>
            <person name="Campbell K.S."/>
            <person name="Hradecky P."/>
            <person name="Huang Y."/>
            <person name="Kaminker J.S."/>
            <person name="Millburn G.H."/>
            <person name="Prochnik S.E."/>
            <person name="Smith C.D."/>
            <person name="Tupy J.L."/>
            <person name="Whitfield E.J."/>
            <person name="Bayraktaroglu L."/>
            <person name="Berman B.P."/>
            <person name="Bettencourt B.R."/>
            <person name="Celniker S.E."/>
            <person name="de Grey A.D.N.J."/>
            <person name="Drysdale R.A."/>
            <person name="Harris N.L."/>
            <person name="Richter J."/>
            <person name="Russo S."/>
            <person name="Schroeder A.J."/>
            <person name="Shu S.Q."/>
            <person name="Stapleton M."/>
            <person name="Yamada C."/>
            <person name="Ashburner M."/>
            <person name="Gelbart W.M."/>
            <person name="Rubin G.M."/>
            <person name="Lewis S.E."/>
        </authorList>
    </citation>
    <scope>GENOME REANNOTATION</scope>
    <source>
        <strain>Berkeley</strain>
    </source>
</reference>
<reference key="4">
    <citation type="journal article" date="2002" name="Genome Biol.">
        <title>A Drosophila full-length cDNA resource.</title>
        <authorList>
            <person name="Stapleton M."/>
            <person name="Carlson J.W."/>
            <person name="Brokstein P."/>
            <person name="Yu C."/>
            <person name="Champe M."/>
            <person name="George R.A."/>
            <person name="Guarin H."/>
            <person name="Kronmiller B."/>
            <person name="Pacleb J.M."/>
            <person name="Park S."/>
            <person name="Wan K.H."/>
            <person name="Rubin G.M."/>
            <person name="Celniker S.E."/>
        </authorList>
    </citation>
    <scope>NUCLEOTIDE SEQUENCE [LARGE SCALE MRNA] (ISOFORM 1)</scope>
    <source>
        <strain>Berkeley</strain>
        <tissue>Embryo</tissue>
        <tissue>Ovary</tissue>
    </source>
</reference>
<reference key="5">
    <citation type="journal article" date="2002" name="Mech. Dev.">
        <title>Differential expression of the Drosophila mitofusin genes fuzzy onions (fzo) and dmfn.</title>
        <authorList>
            <person name="Hwa J.J."/>
            <person name="Hiller M.A."/>
            <person name="Fuller M.T."/>
            <person name="Santel A."/>
        </authorList>
    </citation>
    <scope>TISSUE SPECIFICITY</scope>
    <scope>DEVELOPMENTAL STAGE</scope>
</reference>
<reference key="6">
    <citation type="journal article" date="2008" name="J. Proteome Res.">
        <title>Phosphoproteome analysis of Drosophila melanogaster embryos.</title>
        <authorList>
            <person name="Zhai B."/>
            <person name="Villen J."/>
            <person name="Beausoleil S.A."/>
            <person name="Mintseris J."/>
            <person name="Gygi S.P."/>
        </authorList>
    </citation>
    <scope>PHOSPHORYLATION [LARGE SCALE ANALYSIS] AT THR-8; SER-38; THR-553; SER-554 AND THR-555</scope>
    <scope>IDENTIFICATION BY MASS SPECTROMETRY</scope>
    <source>
        <tissue>Embryo</tissue>
    </source>
</reference>
<reference key="7">
    <citation type="journal article" date="2008" name="Proc. Natl. Acad. Sci. U.S.A.">
        <title>The Parkinson's disease genes pink1 and parkin promote mitochondrial fission and/or inhibit fusion in Drosophila.</title>
        <authorList>
            <person name="Deng H."/>
            <person name="Dodson M.W."/>
            <person name="Huang H."/>
            <person name="Guo M."/>
        </authorList>
    </citation>
    <scope>FUNCTION</scope>
    <scope>DISRUPTION PHENOTYPE</scope>
</reference>
<reference key="8">
    <citation type="journal article" date="2010" name="Proc. Natl. Acad. Sci. U.S.A.">
        <title>Drosophila parkin requires PINK1 for mitochondrial translocation and ubiquitinates mitofusin.</title>
        <authorList>
            <person name="Ziviani E."/>
            <person name="Tao R.N."/>
            <person name="Whitworth A.J."/>
        </authorList>
    </citation>
    <scope>FUNCTION</scope>
    <scope>UBIQUITINATION</scope>
    <scope>DISRUPTION PHENOTYPE</scope>
</reference>
<reference key="9">
    <citation type="journal article" date="2011" name="Gene">
        <title>Diminution of eIF4E activity suppresses parkin mutant phenotypes.</title>
        <authorList>
            <person name="Ottone C."/>
            <person name="Galasso A."/>
            <person name="Gemei M."/>
            <person name="Pisa V."/>
            <person name="Gigliotti S."/>
            <person name="Piccioni F."/>
            <person name="Graziani F."/>
            <person name="Verrotti di Pianella A."/>
        </authorList>
    </citation>
    <scope>FUNCTION</scope>
    <scope>DISRUPTION PHENOTYPE</scope>
</reference>
<reference key="10">
    <citation type="journal article" date="2012" name="PLoS Genet.">
        <title>Parkinson's disease-associated kinase PINK1 regulates Miro protein level and axonal transport of mitochondria.</title>
        <authorList>
            <person name="Liu S."/>
            <person name="Sawada T."/>
            <person name="Lee S."/>
            <person name="Yu W."/>
            <person name="Silverio G."/>
            <person name="Alapatt P."/>
            <person name="Millan I."/>
            <person name="Shen A."/>
            <person name="Saxton W."/>
            <person name="Kanao T."/>
            <person name="Takahashi R."/>
            <person name="Hattori N."/>
            <person name="Imai Y."/>
            <person name="Lu B."/>
        </authorList>
    </citation>
    <scope>FUNCTION</scope>
    <scope>DISRUPTION PHENOTYPE</scope>
</reference>
<reference key="11">
    <citation type="journal article" date="2014" name="Circ. Res.">
        <title>Mitochondrial contagion induced by Parkin deficiency in Drosophila hearts and its containment by suppressing mitofusin.</title>
        <authorList>
            <person name="Bhandari P."/>
            <person name="Song M."/>
            <person name="Chen Y."/>
            <person name="Burelle Y."/>
            <person name="Dorn G.W. II"/>
        </authorList>
    </citation>
    <scope>FUNCTION</scope>
    <scope>DISRUPTION PHENOTYPE</scope>
</reference>
<reference key="12">
    <citation type="journal article" date="2014" name="Elife">
        <title>MUL1 acts in parallel to the PINK1/parkin pathway in regulating mitofusin and compensates for loss of PINK1/parkin.</title>
        <authorList>
            <person name="Yun J."/>
            <person name="Puri R."/>
            <person name="Yang H."/>
            <person name="Lizzio M.A."/>
            <person name="Wu C."/>
            <person name="Sheng Z.H."/>
            <person name="Guo M."/>
        </authorList>
    </citation>
    <scope>INTERACTION WITH MUL1</scope>
    <scope>UBIQUITINATION</scope>
</reference>
<reference key="13">
    <citation type="journal article" date="2015" name="Nature">
        <title>Regulation of mitochondrial morphology and function by stearoylation of TFR1.</title>
        <authorList>
            <person name="Senyilmaz D."/>
            <person name="Virtue S."/>
            <person name="Xu X."/>
            <person name="Tan C.Y."/>
            <person name="Griffin J.L."/>
            <person name="Miller A.K."/>
            <person name="Vidal-Puig A."/>
            <person name="Teleman A.A."/>
        </authorList>
    </citation>
    <scope>FUNCTION</scope>
    <scope>SUBCELLULAR LOCATION</scope>
    <scope>DISRUPTION PHENOTYPE</scope>
    <scope>UBIQUITINATION</scope>
</reference>
<reference key="14">
    <citation type="journal article" date="2015" name="Cell">
        <title>Glial lipid droplets and ROS induced by mitochondrial defects promote neurodegeneration.</title>
        <authorList>
            <person name="Liu L."/>
            <person name="Zhang K."/>
            <person name="Sandoval H."/>
            <person name="Yamamoto S."/>
            <person name="Jaiswal M."/>
            <person name="Sanz E."/>
            <person name="Li Z."/>
            <person name="Hui J."/>
            <person name="Graham B.H."/>
            <person name="Quintana A."/>
            <person name="Bellen H.J."/>
        </authorList>
    </citation>
    <scope>MUTAGENESIS OF ILE-221</scope>
</reference>
<gene>
    <name type="primary">Marf</name>
    <name type="synonym">dmfn</name>
    <name type="ORF">CG3869</name>
</gene>
<sequence>MAAYLNRTISMVTGQTGPADDDRHASSTDTVDKSGPGSPLSRFNSSLQQSGSTMAANLLPESRLYQSNDKSPLQIFVRAKKKINDIYGEIEEYVHETTTFINALHAEAEIVDKAERELFESYVYKVAAIREVLQRDHMKVAFFGRTSNGKSSVINAMLREKILPSGIGHTTNCFCQVEGSNGGEAYLMTEGSEEKLNVVNIKQLANALCQEKLCESSLVRIFWPRERCSLLRDDVVFVDSPGVDVSANLDDWIDNHCLNADVFVLVLNAESTMTRAEKQFFHTVSQKLSKPNIFILNNRWDASANEPECQESVKSQHTERCIDFLTKELKVSNEKEAAERVFFVSARETLQARIEEAKGNPPHMGAIAEGFQIRYFEFQDFERKFEECISQSAVKTKFQQHSSRGKSVSGDMKSMLDNIYERITIFRNLKQDQKNLLTERIQGTETQMMQVTREMKMKIHNMVEEVEEKVSKALNEEIWRLGVLIDEFNMPFHPERLVLNIYKKELNAHVESGLGSNLRARLSMALAMNVESAQTEMTDRMHALVPNEQLLATSTKMVVRTQPFEMLYSLNCQNLCADFQEDLEFKFSWGIAAMIQRFTGKVRERSKKGQPALVNRQSSIGHSVSTPTTTPVEATPVCLLPAPVVAGITPEQLSLISRFAVSSIGSQGTVGGLVVAGVMLKTIGWRVLVGVGALYGCIYLYERLSWTNSAKERTFKSQYVRHATKKLKMIVDLTSANCSHQVQQELSSTFARLCRTVDTATTDMNDELKTLDSQLNILEANQKQLKLLRNKANYIQNELDIFEHNYISPQ</sequence>